<organism>
    <name type="scientific">Xanthomonas oryzae pv. oryzae (strain MAFF 311018)</name>
    <dbReference type="NCBI Taxonomy" id="342109"/>
    <lineage>
        <taxon>Bacteria</taxon>
        <taxon>Pseudomonadati</taxon>
        <taxon>Pseudomonadota</taxon>
        <taxon>Gammaproteobacteria</taxon>
        <taxon>Lysobacterales</taxon>
        <taxon>Lysobacteraceae</taxon>
        <taxon>Xanthomonas</taxon>
    </lineage>
</organism>
<name>MURL_XANOM</name>
<comment type="function">
    <text evidence="1 2">Cell wall formation. Catalyzes epimerization of the terminal L-glutamate in UDP-N-acetyl-alpha-D-muramoyl-L-alanyl-L-glutamate.</text>
</comment>
<comment type="catalytic activity">
    <reaction evidence="1 2">
        <text>UDP-N-acetyl-alpha-D-muramoyl-L-alanyl-L-glutamate + ATP + H2O = UDP-N-acetyl-alpha-D-muramoyl-L-alanyl-D-glutamate + AMP + diphosphate + H(+)</text>
        <dbReference type="Rhea" id="RHEA:58812"/>
        <dbReference type="ChEBI" id="CHEBI:15377"/>
        <dbReference type="ChEBI" id="CHEBI:15378"/>
        <dbReference type="ChEBI" id="CHEBI:30616"/>
        <dbReference type="ChEBI" id="CHEBI:33019"/>
        <dbReference type="ChEBI" id="CHEBI:83900"/>
        <dbReference type="ChEBI" id="CHEBI:142725"/>
        <dbReference type="ChEBI" id="CHEBI:456215"/>
        <dbReference type="EC" id="5.1.1.23"/>
    </reaction>
    <physiologicalReaction direction="left-to-right" evidence="1 2">
        <dbReference type="Rhea" id="RHEA:58813"/>
    </physiologicalReaction>
</comment>
<comment type="pathway">
    <text evidence="1 5">Cell wall biogenesis; peptidoglycan biosynthesis.</text>
</comment>
<comment type="miscellaneous">
    <text evidence="5">The combined activity of MurD2 and MurL provides an alternative route for incorporating D-glutamate into peptidoglycan.</text>
</comment>
<comment type="similarity">
    <text evidence="1 4">Belongs to the MurL family.</text>
</comment>
<dbReference type="EC" id="5.1.1.23" evidence="1 2"/>
<dbReference type="EMBL" id="AP008229">
    <property type="protein sequence ID" value="BAE68074.1"/>
    <property type="molecule type" value="Genomic_DNA"/>
</dbReference>
<dbReference type="RefSeq" id="WP_011258235.1">
    <property type="nucleotide sequence ID" value="NC_007705.1"/>
</dbReference>
<dbReference type="KEGG" id="xom:XOO1319"/>
<dbReference type="UniPathway" id="UPA00219"/>
<dbReference type="GO" id="GO:0005737">
    <property type="term" value="C:cytoplasm"/>
    <property type="evidence" value="ECO:0007669"/>
    <property type="project" value="UniProtKB-UniRule"/>
</dbReference>
<dbReference type="GO" id="GO:0016855">
    <property type="term" value="F:racemase and epimerase activity, acting on amino acids and derivatives"/>
    <property type="evidence" value="ECO:0007669"/>
    <property type="project" value="UniProtKB-UniRule"/>
</dbReference>
<dbReference type="GO" id="GO:0051301">
    <property type="term" value="P:cell division"/>
    <property type="evidence" value="ECO:0007669"/>
    <property type="project" value="UniProtKB-KW"/>
</dbReference>
<dbReference type="GO" id="GO:0071555">
    <property type="term" value="P:cell wall organization"/>
    <property type="evidence" value="ECO:0007669"/>
    <property type="project" value="UniProtKB-KW"/>
</dbReference>
<dbReference type="GO" id="GO:0009252">
    <property type="term" value="P:peptidoglycan biosynthetic process"/>
    <property type="evidence" value="ECO:0007669"/>
    <property type="project" value="UniProtKB-UniRule"/>
</dbReference>
<dbReference type="GO" id="GO:0008360">
    <property type="term" value="P:regulation of cell shape"/>
    <property type="evidence" value="ECO:0007669"/>
    <property type="project" value="UniProtKB-KW"/>
</dbReference>
<dbReference type="HAMAP" id="MF_02209">
    <property type="entry name" value="MurL"/>
    <property type="match status" value="1"/>
</dbReference>
<dbReference type="InterPro" id="IPR043689">
    <property type="entry name" value="MurL"/>
</dbReference>
<dbReference type="InterPro" id="IPR053538">
    <property type="entry name" value="MurL_epimerase"/>
</dbReference>
<dbReference type="NCBIfam" id="NF041275">
    <property type="entry name" value="MurL_Xanthmoales"/>
    <property type="match status" value="1"/>
</dbReference>
<protein>
    <recommendedName>
        <fullName evidence="1 4">UDP-N-acetyl-alpha-D-muramoyl-L-alanyl-L-glutamate epimerase</fullName>
        <ecNumber evidence="1 2">5.1.1.23</ecNumber>
    </recommendedName>
    <alternativeName>
        <fullName evidence="1 3">UDP-MurNAc-L-Ala-L-Glu epimerase</fullName>
    </alternativeName>
</protein>
<keyword id="KW-0131">Cell cycle</keyword>
<keyword id="KW-0132">Cell division</keyword>
<keyword id="KW-0133">Cell shape</keyword>
<keyword id="KW-0961">Cell wall biogenesis/degradation</keyword>
<keyword id="KW-0413">Isomerase</keyword>
<keyword id="KW-0573">Peptidoglycan synthesis</keyword>
<feature type="chain" id="PRO_0000446510" description="UDP-N-acetyl-alpha-D-muramoyl-L-alanyl-L-glutamate epimerase">
    <location>
        <begin position="1"/>
        <end position="451"/>
    </location>
</feature>
<sequence>MSAFDKHQISTFRFVRCALDAQTGVATLVYAFDQGPELVETVAVPGAPFALGGANATAVQQALQLLHLIAGVSYFKAAVPPNIAIDSYSIDAETAALVQSVYLHGLGEFAYRNGLQLHGKIRFPVAAQAAAAAPALGLRVHALVAIGGGKDSLVSIEALRHAGVDQTVSWIGGSQLIRACAERTGLPVLNIGRVLAPELFELNRQGAWNGHIPVTAVNSAILVLAALLNGVDQVVFSNERSASYGSQIPGTGEVNHQWSKGWAFEQAFGDYVQRHVAADLRYYSLLRPLSELAVARQFAKTDRYDAHFSSCNRNFHIMGERPVHRWCGVCPKCHFVFLALAPFMPKTRLVNIFGRNLLDDATQAGGYDALLEFQDHKPFECVGEGRESRTAMAVLASRAEWKEDAVVKRFIRDIQPQLDPNDLQVEPLMAIEGEHRIPPALWERVRANFAV</sequence>
<gene>
    <name evidence="1 3" type="primary">murL</name>
    <name evidence="6" type="ordered locus">XOO1319</name>
</gene>
<evidence type="ECO:0000255" key="1">
    <source>
        <dbReference type="HAMAP-Rule" id="MF_02209"/>
    </source>
</evidence>
<evidence type="ECO:0000269" key="2">
    <source>
    </source>
</evidence>
<evidence type="ECO:0000303" key="3">
    <source>
    </source>
</evidence>
<evidence type="ECO:0000305" key="4"/>
<evidence type="ECO:0000305" key="5">
    <source>
    </source>
</evidence>
<evidence type="ECO:0000312" key="6">
    <source>
        <dbReference type="EMBL" id="BAE68074.1"/>
    </source>
</evidence>
<accession>P0DQD8</accession>
<reference key="1">
    <citation type="journal article" date="2005" name="Jpn. Agric. Res. Q.">
        <title>Genome sequence of Xanthomonas oryzae pv. oryzae suggests contribution of large numbers of effector genes and insertion sequences to its race diversity.</title>
        <authorList>
            <person name="Ochiai H."/>
            <person name="Inoue Y."/>
            <person name="Takeya M."/>
            <person name="Sasaki A."/>
            <person name="Kaku H."/>
        </authorList>
    </citation>
    <scope>NUCLEOTIDE SEQUENCE [LARGE SCALE GENOMIC DNA]</scope>
    <source>
        <strain>MAFF 311018</strain>
    </source>
</reference>
<reference key="2">
    <citation type="journal article" date="2017" name="J. Am. Chem. Soc.">
        <title>A glycopeptidyl-glutamate epimerase for bacterial peptidoglycan biosynthesis.</title>
        <authorList>
            <person name="Feng R."/>
            <person name="Satoh Y."/>
            <person name="Ogasawara Y."/>
            <person name="Yoshimura T."/>
            <person name="Dairi T."/>
        </authorList>
    </citation>
    <scope>FUNCTION</scope>
    <scope>CATALYTIC ACTIVITY</scope>
    <scope>PATHWAY</scope>
    <source>
        <strain>MAFF 311018</strain>
    </source>
</reference>
<proteinExistence type="evidence at protein level"/>